<dbReference type="EMBL" id="CP000774">
    <property type="protein sequence ID" value="ABS64363.1"/>
    <property type="molecule type" value="Genomic_DNA"/>
</dbReference>
<dbReference type="RefSeq" id="WP_012111677.1">
    <property type="nucleotide sequence ID" value="NC_009719.1"/>
</dbReference>
<dbReference type="SMR" id="A7HWT0"/>
<dbReference type="STRING" id="402881.Plav_2755"/>
<dbReference type="KEGG" id="pla:Plav_2755"/>
<dbReference type="eggNOG" id="COG0200">
    <property type="taxonomic scope" value="Bacteria"/>
</dbReference>
<dbReference type="HOGENOM" id="CLU_055188_4_0_5"/>
<dbReference type="OrthoDB" id="9810293at2"/>
<dbReference type="Proteomes" id="UP000006377">
    <property type="component" value="Chromosome"/>
</dbReference>
<dbReference type="GO" id="GO:0022625">
    <property type="term" value="C:cytosolic large ribosomal subunit"/>
    <property type="evidence" value="ECO:0007669"/>
    <property type="project" value="TreeGrafter"/>
</dbReference>
<dbReference type="GO" id="GO:0019843">
    <property type="term" value="F:rRNA binding"/>
    <property type="evidence" value="ECO:0007669"/>
    <property type="project" value="UniProtKB-UniRule"/>
</dbReference>
<dbReference type="GO" id="GO:0003735">
    <property type="term" value="F:structural constituent of ribosome"/>
    <property type="evidence" value="ECO:0007669"/>
    <property type="project" value="InterPro"/>
</dbReference>
<dbReference type="GO" id="GO:0006412">
    <property type="term" value="P:translation"/>
    <property type="evidence" value="ECO:0007669"/>
    <property type="project" value="UniProtKB-UniRule"/>
</dbReference>
<dbReference type="Gene3D" id="3.100.10.10">
    <property type="match status" value="1"/>
</dbReference>
<dbReference type="HAMAP" id="MF_01341">
    <property type="entry name" value="Ribosomal_uL15"/>
    <property type="match status" value="1"/>
</dbReference>
<dbReference type="InterPro" id="IPR030878">
    <property type="entry name" value="Ribosomal_uL15"/>
</dbReference>
<dbReference type="InterPro" id="IPR021131">
    <property type="entry name" value="Ribosomal_uL15/eL18"/>
</dbReference>
<dbReference type="InterPro" id="IPR036227">
    <property type="entry name" value="Ribosomal_uL15/eL18_sf"/>
</dbReference>
<dbReference type="InterPro" id="IPR005749">
    <property type="entry name" value="Ribosomal_uL15_bac-type"/>
</dbReference>
<dbReference type="InterPro" id="IPR001196">
    <property type="entry name" value="Ribosomal_uL15_CS"/>
</dbReference>
<dbReference type="NCBIfam" id="TIGR01071">
    <property type="entry name" value="rplO_bact"/>
    <property type="match status" value="1"/>
</dbReference>
<dbReference type="PANTHER" id="PTHR12934">
    <property type="entry name" value="50S RIBOSOMAL PROTEIN L15"/>
    <property type="match status" value="1"/>
</dbReference>
<dbReference type="PANTHER" id="PTHR12934:SF11">
    <property type="entry name" value="LARGE RIBOSOMAL SUBUNIT PROTEIN UL15M"/>
    <property type="match status" value="1"/>
</dbReference>
<dbReference type="Pfam" id="PF00828">
    <property type="entry name" value="Ribosomal_L27A"/>
    <property type="match status" value="1"/>
</dbReference>
<dbReference type="SUPFAM" id="SSF52080">
    <property type="entry name" value="Ribosomal proteins L15p and L18e"/>
    <property type="match status" value="1"/>
</dbReference>
<dbReference type="PROSITE" id="PS00475">
    <property type="entry name" value="RIBOSOMAL_L15"/>
    <property type="match status" value="1"/>
</dbReference>
<feature type="chain" id="PRO_1000073315" description="Large ribosomal subunit protein uL15">
    <location>
        <begin position="1"/>
        <end position="160"/>
    </location>
</feature>
<feature type="region of interest" description="Disordered" evidence="2">
    <location>
        <begin position="1"/>
        <end position="41"/>
    </location>
</feature>
<feature type="compositionally biased region" description="Basic and acidic residues" evidence="2">
    <location>
        <begin position="1"/>
        <end position="13"/>
    </location>
</feature>
<feature type="compositionally biased region" description="Gly residues" evidence="2">
    <location>
        <begin position="21"/>
        <end position="35"/>
    </location>
</feature>
<keyword id="KW-1185">Reference proteome</keyword>
<keyword id="KW-0687">Ribonucleoprotein</keyword>
<keyword id="KW-0689">Ribosomal protein</keyword>
<keyword id="KW-0694">RNA-binding</keyword>
<keyword id="KW-0699">rRNA-binding</keyword>
<reference key="1">
    <citation type="journal article" date="2011" name="Stand. Genomic Sci.">
        <title>Complete genome sequence of Parvibaculum lavamentivorans type strain (DS-1(T)).</title>
        <authorList>
            <person name="Schleheck D."/>
            <person name="Weiss M."/>
            <person name="Pitluck S."/>
            <person name="Bruce D."/>
            <person name="Land M.L."/>
            <person name="Han S."/>
            <person name="Saunders E."/>
            <person name="Tapia R."/>
            <person name="Detter C."/>
            <person name="Brettin T."/>
            <person name="Han J."/>
            <person name="Woyke T."/>
            <person name="Goodwin L."/>
            <person name="Pennacchio L."/>
            <person name="Nolan M."/>
            <person name="Cook A.M."/>
            <person name="Kjelleberg S."/>
            <person name="Thomas T."/>
        </authorList>
    </citation>
    <scope>NUCLEOTIDE SEQUENCE [LARGE SCALE GENOMIC DNA]</scope>
    <source>
        <strain>DS-1 / DSM 13023 / NCIMB 13966</strain>
    </source>
</reference>
<protein>
    <recommendedName>
        <fullName evidence="1">Large ribosomal subunit protein uL15</fullName>
    </recommendedName>
    <alternativeName>
        <fullName evidence="3">50S ribosomal protein L15</fullName>
    </alternativeName>
</protein>
<gene>
    <name evidence="1" type="primary">rplO</name>
    <name type="ordered locus">Plav_2755</name>
</gene>
<proteinExistence type="inferred from homology"/>
<accession>A7HWT0</accession>
<evidence type="ECO:0000255" key="1">
    <source>
        <dbReference type="HAMAP-Rule" id="MF_01341"/>
    </source>
</evidence>
<evidence type="ECO:0000256" key="2">
    <source>
        <dbReference type="SAM" id="MobiDB-lite"/>
    </source>
</evidence>
<evidence type="ECO:0000305" key="3"/>
<sequence length="160" mass="16564">MKLNEIRDNEGARKSRIRVGRGIGSGKGKTGGRGVKGQKSRTGVAIKGYEGGQMPIHMRLPKRGFKNLFRPDYNSVNLGRVQAAVDAGKLDKGATVDAAALVAAGVIRRAKDGVRLLAQGELKAKLSFEVAGVSASAKEAVEKAGGSVTVVGPKAKAAAE</sequence>
<comment type="function">
    <text evidence="1">Binds to the 23S rRNA.</text>
</comment>
<comment type="subunit">
    <text evidence="1">Part of the 50S ribosomal subunit.</text>
</comment>
<comment type="similarity">
    <text evidence="1">Belongs to the universal ribosomal protein uL15 family.</text>
</comment>
<name>RL15_PARL1</name>
<organism>
    <name type="scientific">Parvibaculum lavamentivorans (strain DS-1 / DSM 13023 / NCIMB 13966)</name>
    <dbReference type="NCBI Taxonomy" id="402881"/>
    <lineage>
        <taxon>Bacteria</taxon>
        <taxon>Pseudomonadati</taxon>
        <taxon>Pseudomonadota</taxon>
        <taxon>Alphaproteobacteria</taxon>
        <taxon>Hyphomicrobiales</taxon>
        <taxon>Parvibaculaceae</taxon>
        <taxon>Parvibaculum</taxon>
    </lineage>
</organism>